<name>YBEY_SHESM</name>
<proteinExistence type="inferred from homology"/>
<dbReference type="EC" id="3.1.-.-" evidence="1"/>
<dbReference type="EMBL" id="CP000446">
    <property type="protein sequence ID" value="ABI38082.1"/>
    <property type="molecule type" value="Genomic_DNA"/>
</dbReference>
<dbReference type="RefSeq" id="WP_011621794.1">
    <property type="nucleotide sequence ID" value="NC_008321.1"/>
</dbReference>
<dbReference type="SMR" id="Q0HLI5"/>
<dbReference type="KEGG" id="she:Shewmr4_1002"/>
<dbReference type="HOGENOM" id="CLU_106710_0_1_6"/>
<dbReference type="GO" id="GO:0005737">
    <property type="term" value="C:cytoplasm"/>
    <property type="evidence" value="ECO:0007669"/>
    <property type="project" value="UniProtKB-SubCell"/>
</dbReference>
<dbReference type="GO" id="GO:0004222">
    <property type="term" value="F:metalloendopeptidase activity"/>
    <property type="evidence" value="ECO:0007669"/>
    <property type="project" value="InterPro"/>
</dbReference>
<dbReference type="GO" id="GO:0004521">
    <property type="term" value="F:RNA endonuclease activity"/>
    <property type="evidence" value="ECO:0007669"/>
    <property type="project" value="UniProtKB-UniRule"/>
</dbReference>
<dbReference type="GO" id="GO:0008270">
    <property type="term" value="F:zinc ion binding"/>
    <property type="evidence" value="ECO:0007669"/>
    <property type="project" value="UniProtKB-UniRule"/>
</dbReference>
<dbReference type="GO" id="GO:0006364">
    <property type="term" value="P:rRNA processing"/>
    <property type="evidence" value="ECO:0007669"/>
    <property type="project" value="UniProtKB-UniRule"/>
</dbReference>
<dbReference type="Gene3D" id="3.40.390.30">
    <property type="entry name" value="Metalloproteases ('zincins'), catalytic domain"/>
    <property type="match status" value="1"/>
</dbReference>
<dbReference type="HAMAP" id="MF_00009">
    <property type="entry name" value="Endoribonucl_YbeY"/>
    <property type="match status" value="1"/>
</dbReference>
<dbReference type="InterPro" id="IPR023091">
    <property type="entry name" value="MetalPrtase_cat_dom_sf_prd"/>
</dbReference>
<dbReference type="InterPro" id="IPR002036">
    <property type="entry name" value="YbeY"/>
</dbReference>
<dbReference type="InterPro" id="IPR020549">
    <property type="entry name" value="YbeY_CS"/>
</dbReference>
<dbReference type="NCBIfam" id="TIGR00043">
    <property type="entry name" value="rRNA maturation RNase YbeY"/>
    <property type="match status" value="1"/>
</dbReference>
<dbReference type="PANTHER" id="PTHR46986">
    <property type="entry name" value="ENDORIBONUCLEASE YBEY, CHLOROPLASTIC"/>
    <property type="match status" value="1"/>
</dbReference>
<dbReference type="PANTHER" id="PTHR46986:SF1">
    <property type="entry name" value="ENDORIBONUCLEASE YBEY, CHLOROPLASTIC"/>
    <property type="match status" value="1"/>
</dbReference>
<dbReference type="Pfam" id="PF02130">
    <property type="entry name" value="YbeY"/>
    <property type="match status" value="1"/>
</dbReference>
<dbReference type="SUPFAM" id="SSF55486">
    <property type="entry name" value="Metalloproteases ('zincins'), catalytic domain"/>
    <property type="match status" value="1"/>
</dbReference>
<dbReference type="PROSITE" id="PS01306">
    <property type="entry name" value="UPF0054"/>
    <property type="match status" value="1"/>
</dbReference>
<accession>Q0HLI5</accession>
<keyword id="KW-0963">Cytoplasm</keyword>
<keyword id="KW-0255">Endonuclease</keyword>
<keyword id="KW-0378">Hydrolase</keyword>
<keyword id="KW-0479">Metal-binding</keyword>
<keyword id="KW-0540">Nuclease</keyword>
<keyword id="KW-0690">Ribosome biogenesis</keyword>
<keyword id="KW-0698">rRNA processing</keyword>
<keyword id="KW-0862">Zinc</keyword>
<reference key="1">
    <citation type="submission" date="2006-08" db="EMBL/GenBank/DDBJ databases">
        <title>Complete sequence of Shewanella sp. MR-4.</title>
        <authorList>
            <consortium name="US DOE Joint Genome Institute"/>
            <person name="Copeland A."/>
            <person name="Lucas S."/>
            <person name="Lapidus A."/>
            <person name="Barry K."/>
            <person name="Detter J.C."/>
            <person name="Glavina del Rio T."/>
            <person name="Hammon N."/>
            <person name="Israni S."/>
            <person name="Dalin E."/>
            <person name="Tice H."/>
            <person name="Pitluck S."/>
            <person name="Kiss H."/>
            <person name="Brettin T."/>
            <person name="Bruce D."/>
            <person name="Han C."/>
            <person name="Tapia R."/>
            <person name="Gilna P."/>
            <person name="Schmutz J."/>
            <person name="Larimer F."/>
            <person name="Land M."/>
            <person name="Hauser L."/>
            <person name="Kyrpides N."/>
            <person name="Mikhailova N."/>
            <person name="Nealson K."/>
            <person name="Konstantinidis K."/>
            <person name="Klappenbach J."/>
            <person name="Tiedje J."/>
            <person name="Richardson P."/>
        </authorList>
    </citation>
    <scope>NUCLEOTIDE SEQUENCE [LARGE SCALE GENOMIC DNA]</scope>
    <source>
        <strain>MR-4</strain>
    </source>
</reference>
<evidence type="ECO:0000255" key="1">
    <source>
        <dbReference type="HAMAP-Rule" id="MF_00009"/>
    </source>
</evidence>
<sequence length="153" mass="17314">MSLDLALDVQYATASDYLPSEEQFALWVKTAIGNSMEQAELTIRIVDSRESQMLNSTYRGKDKPTNVLSFPFEAPPEIELPLLGDLVICATVVENEAREQDKTLEAHWAHMVVHGCLHLLGYDHIEDEEAEEMESLETQLIESLGFTDPYKEQ</sequence>
<gene>
    <name evidence="1" type="primary">ybeY</name>
    <name type="ordered locus">Shewmr4_1002</name>
</gene>
<comment type="function">
    <text evidence="1">Single strand-specific metallo-endoribonuclease involved in late-stage 70S ribosome quality control and in maturation of the 3' terminus of the 16S rRNA.</text>
</comment>
<comment type="cofactor">
    <cofactor evidence="1">
        <name>Zn(2+)</name>
        <dbReference type="ChEBI" id="CHEBI:29105"/>
    </cofactor>
    <text evidence="1">Binds 1 zinc ion.</text>
</comment>
<comment type="subcellular location">
    <subcellularLocation>
        <location evidence="1">Cytoplasm</location>
    </subcellularLocation>
</comment>
<comment type="similarity">
    <text evidence="1">Belongs to the endoribonuclease YbeY family.</text>
</comment>
<protein>
    <recommendedName>
        <fullName evidence="1">Endoribonuclease YbeY</fullName>
        <ecNumber evidence="1">3.1.-.-</ecNumber>
    </recommendedName>
</protein>
<feature type="chain" id="PRO_0000284307" description="Endoribonuclease YbeY">
    <location>
        <begin position="1"/>
        <end position="153"/>
    </location>
</feature>
<feature type="binding site" evidence="1">
    <location>
        <position position="114"/>
    </location>
    <ligand>
        <name>Zn(2+)</name>
        <dbReference type="ChEBI" id="CHEBI:29105"/>
        <note>catalytic</note>
    </ligand>
</feature>
<feature type="binding site" evidence="1">
    <location>
        <position position="118"/>
    </location>
    <ligand>
        <name>Zn(2+)</name>
        <dbReference type="ChEBI" id="CHEBI:29105"/>
        <note>catalytic</note>
    </ligand>
</feature>
<feature type="binding site" evidence="1">
    <location>
        <position position="124"/>
    </location>
    <ligand>
        <name>Zn(2+)</name>
        <dbReference type="ChEBI" id="CHEBI:29105"/>
        <note>catalytic</note>
    </ligand>
</feature>
<organism>
    <name type="scientific">Shewanella sp. (strain MR-4)</name>
    <dbReference type="NCBI Taxonomy" id="60480"/>
    <lineage>
        <taxon>Bacteria</taxon>
        <taxon>Pseudomonadati</taxon>
        <taxon>Pseudomonadota</taxon>
        <taxon>Gammaproteobacteria</taxon>
        <taxon>Alteromonadales</taxon>
        <taxon>Shewanellaceae</taxon>
        <taxon>Shewanella</taxon>
    </lineage>
</organism>